<gene>
    <name type="primary">psaL</name>
    <name type="ordered locus">slr1655</name>
</gene>
<sequence length="157" mass="16624">MAESNQVVQAYNGDPFVGHLSTPISDSAFTRTFIGNLPAYRKGLSPILRGLEVGMAHGYFLIGPWTLLGPLRDSEYQYIGGLIGALALILVATAALSSYGLVTFQGEQGSGDTLQTADGWSQFAAGFFVGGMGGAFVAYFLLENLSVVDGIFRGLFN</sequence>
<accession>P37277</accession>
<feature type="chain" id="PRO_0000194704" description="Photosystem I reaction center subunit XI">
    <location>
        <begin position="1"/>
        <end position="157"/>
    </location>
</feature>
<feature type="transmembrane region" description="Helical" evidence="2">
    <location>
        <begin position="82"/>
        <end position="102"/>
    </location>
</feature>
<feature type="transmembrane region" description="Helical" evidence="2">
    <location>
        <begin position="127"/>
        <end position="147"/>
    </location>
</feature>
<feature type="strand" evidence="7">
    <location>
        <begin position="9"/>
        <end position="11"/>
    </location>
</feature>
<feature type="turn" evidence="7">
    <location>
        <begin position="23"/>
        <end position="25"/>
    </location>
</feature>
<feature type="helix" evidence="7">
    <location>
        <begin position="28"/>
        <end position="35"/>
    </location>
</feature>
<feature type="turn" evidence="7">
    <location>
        <begin position="38"/>
        <end position="40"/>
    </location>
</feature>
<feature type="helix" evidence="7">
    <location>
        <begin position="46"/>
        <end position="59"/>
    </location>
</feature>
<feature type="helix" evidence="7">
    <location>
        <begin position="60"/>
        <end position="62"/>
    </location>
</feature>
<feature type="turn" evidence="7">
    <location>
        <begin position="64"/>
        <end position="66"/>
    </location>
</feature>
<feature type="strand" evidence="7">
    <location>
        <begin position="67"/>
        <end position="71"/>
    </location>
</feature>
<feature type="strand" evidence="6">
    <location>
        <begin position="72"/>
        <end position="75"/>
    </location>
</feature>
<feature type="helix" evidence="7">
    <location>
        <begin position="77"/>
        <end position="103"/>
    </location>
</feature>
<feature type="strand" evidence="5">
    <location>
        <begin position="104"/>
        <end position="106"/>
    </location>
</feature>
<feature type="strand" evidence="7">
    <location>
        <begin position="113"/>
        <end position="116"/>
    </location>
</feature>
<feature type="helix" evidence="7">
    <location>
        <begin position="117"/>
        <end position="142"/>
    </location>
</feature>
<feature type="helix" evidence="4">
    <location>
        <begin position="145"/>
        <end position="153"/>
    </location>
</feature>
<protein>
    <recommendedName>
        <fullName>Photosystem I reaction center subunit XI</fullName>
    </recommendedName>
    <alternativeName>
        <fullName>PSI subunit V</fullName>
    </alternativeName>
    <alternativeName>
        <fullName>PSI-L</fullName>
    </alternativeName>
</protein>
<evidence type="ECO:0000250" key="1"/>
<evidence type="ECO:0000255" key="2"/>
<evidence type="ECO:0000305" key="3"/>
<evidence type="ECO:0007829" key="4">
    <source>
        <dbReference type="PDB" id="6UZV"/>
    </source>
</evidence>
<evidence type="ECO:0007829" key="5">
    <source>
        <dbReference type="PDB" id="8AM5"/>
    </source>
</evidence>
<evidence type="ECO:0007829" key="6">
    <source>
        <dbReference type="PDB" id="8ASL"/>
    </source>
</evidence>
<evidence type="ECO:0007829" key="7">
    <source>
        <dbReference type="PDB" id="8ASP"/>
    </source>
</evidence>
<reference key="1">
    <citation type="journal article" date="1993" name="J. Biol. Chem.">
        <title>Targeted inactivation of the gene psaL encoding a subunit of photosystem I of the cyanobacterium Synechocystis sp. PCC 6803.</title>
        <authorList>
            <person name="Chitnis V.P."/>
            <person name="Xu Q."/>
            <person name="Yu L."/>
            <person name="Golbeck J.H."/>
            <person name="Nakamoto H."/>
            <person name="Xie D.L."/>
            <person name="Chitnis P.R."/>
        </authorList>
    </citation>
    <scope>NUCLEOTIDE SEQUENCE [GENOMIC DNA]</scope>
</reference>
<reference key="2">
    <citation type="journal article" date="1996" name="DNA Res.">
        <title>Sequence analysis of the genome of the unicellular cyanobacterium Synechocystis sp. strain PCC6803. II. Sequence determination of the entire genome and assignment of potential protein-coding regions.</title>
        <authorList>
            <person name="Kaneko T."/>
            <person name="Sato S."/>
            <person name="Kotani H."/>
            <person name="Tanaka A."/>
            <person name="Asamizu E."/>
            <person name="Nakamura Y."/>
            <person name="Miyajima N."/>
            <person name="Hirosawa M."/>
            <person name="Sugiura M."/>
            <person name="Sasamoto S."/>
            <person name="Kimura T."/>
            <person name="Hosouchi T."/>
            <person name="Matsuno A."/>
            <person name="Muraki A."/>
            <person name="Nakazaki N."/>
            <person name="Naruo K."/>
            <person name="Okumura S."/>
            <person name="Shimpo S."/>
            <person name="Takeuchi C."/>
            <person name="Wada T."/>
            <person name="Watanabe A."/>
            <person name="Yamada M."/>
            <person name="Yasuda M."/>
            <person name="Tabata S."/>
        </authorList>
    </citation>
    <scope>NUCLEOTIDE SEQUENCE [LARGE SCALE GENOMIC DNA]</scope>
    <source>
        <strain>ATCC 27184 / PCC 6803 / Kazusa</strain>
    </source>
</reference>
<reference key="3">
    <citation type="journal article" date="1995" name="J. Biol. Chem.">
        <title>Mutational analysis of photosystem I polypeptides in the cyanobacterium Synechocystis sp. PCC 6803. Targeted inactivation of psaI reveals the function of psaI in the structural organization of psaL.</title>
        <authorList>
            <person name="Xu Q."/>
            <person name="Hoppe D."/>
            <person name="Chitnis V.P."/>
            <person name="Odom W.R."/>
            <person name="Guikema J.A."/>
            <person name="Chitnis P.R."/>
        </authorList>
    </citation>
    <scope>NUCLEOTIDE SEQUENCE [GENOMIC DNA] OF 89-157</scope>
</reference>
<proteinExistence type="evidence at protein level"/>
<comment type="subcellular location">
    <subcellularLocation>
        <location evidence="1">Cellular thylakoid membrane</location>
        <topology evidence="1">Multi-pass membrane protein</topology>
    </subcellularLocation>
</comment>
<comment type="similarity">
    <text evidence="3">Belongs to the PsaL family.</text>
</comment>
<keyword id="KW-0002">3D-structure</keyword>
<keyword id="KW-0472">Membrane</keyword>
<keyword id="KW-0602">Photosynthesis</keyword>
<keyword id="KW-0603">Photosystem I</keyword>
<keyword id="KW-1185">Reference proteome</keyword>
<keyword id="KW-0793">Thylakoid</keyword>
<keyword id="KW-0812">Transmembrane</keyword>
<keyword id="KW-1133">Transmembrane helix</keyword>
<dbReference type="EMBL" id="L11649">
    <property type="protein sequence ID" value="AAA27296.1"/>
    <property type="molecule type" value="Genomic_DNA"/>
</dbReference>
<dbReference type="EMBL" id="BA000022">
    <property type="protein sequence ID" value="BAA18773.1"/>
    <property type="molecule type" value="Genomic_DNA"/>
</dbReference>
<dbReference type="EMBL" id="L24773">
    <property type="protein sequence ID" value="AAA99434.1"/>
    <property type="molecule type" value="Genomic_DNA"/>
</dbReference>
<dbReference type="PIR" id="A46735">
    <property type="entry name" value="A46735"/>
</dbReference>
<dbReference type="PDB" id="4L6V">
    <property type="method" value="X-ray"/>
    <property type="resolution" value="3.80 A"/>
    <property type="chains" value="8/L/l=1-157"/>
</dbReference>
<dbReference type="PDB" id="6HQB">
    <property type="method" value="X-ray"/>
    <property type="resolution" value="4.00 A"/>
    <property type="chains" value="L=22-157"/>
</dbReference>
<dbReference type="PDB" id="6NWA">
    <property type="method" value="EM"/>
    <property type="resolution" value="3.48 A"/>
    <property type="chains" value="L/U/l=1-157"/>
</dbReference>
<dbReference type="PDB" id="6UZV">
    <property type="method" value="EM"/>
    <property type="resolution" value="3.10 A"/>
    <property type="chains" value="0/L/l=1-157"/>
</dbReference>
<dbReference type="PDB" id="7UMH">
    <property type="method" value="EM"/>
    <property type="resolution" value="2.60 A"/>
    <property type="chains" value="L/U/l=1-157"/>
</dbReference>
<dbReference type="PDB" id="8AM5">
    <property type="method" value="EM"/>
    <property type="resolution" value="3.10 A"/>
    <property type="chains" value="l=1-157"/>
</dbReference>
<dbReference type="PDB" id="8ASL">
    <property type="method" value="EM"/>
    <property type="resolution" value="3.15 A"/>
    <property type="chains" value="l=1-157"/>
</dbReference>
<dbReference type="PDB" id="8ASP">
    <property type="method" value="EM"/>
    <property type="resolution" value="2.90 A"/>
    <property type="chains" value="l=1-157"/>
</dbReference>
<dbReference type="PDB" id="9AU4">
    <property type="method" value="EM"/>
    <property type="resolution" value="2.03 A"/>
    <property type="chains" value="L/U/l=1-157"/>
</dbReference>
<dbReference type="PDBsum" id="4L6V"/>
<dbReference type="PDBsum" id="6HQB"/>
<dbReference type="PDBsum" id="6NWA"/>
<dbReference type="PDBsum" id="6UZV"/>
<dbReference type="PDBsum" id="7UMH"/>
<dbReference type="PDBsum" id="8AM5"/>
<dbReference type="PDBsum" id="8ASL"/>
<dbReference type="PDBsum" id="8ASP"/>
<dbReference type="PDBsum" id="9AU4"/>
<dbReference type="EMDB" id="EMD-0524"/>
<dbReference type="EMDB" id="EMD-15522"/>
<dbReference type="EMDB" id="EMD-15618"/>
<dbReference type="EMDB" id="EMD-15621"/>
<dbReference type="EMDB" id="EMD-20963"/>
<dbReference type="EMDB" id="EMD-26601"/>
<dbReference type="EMDB" id="EMD-43843"/>
<dbReference type="SMR" id="P37277"/>
<dbReference type="IntAct" id="P37277">
    <property type="interactions" value="7"/>
</dbReference>
<dbReference type="STRING" id="1148.gene:10500545"/>
<dbReference type="PaxDb" id="1148-1653863"/>
<dbReference type="EnsemblBacteria" id="BAA18773">
    <property type="protein sequence ID" value="BAA18773"/>
    <property type="gene ID" value="BAA18773"/>
</dbReference>
<dbReference type="KEGG" id="syn:slr1655"/>
<dbReference type="eggNOG" id="ENOG502ZMJ2">
    <property type="taxonomic scope" value="Bacteria"/>
</dbReference>
<dbReference type="InParanoid" id="P37277"/>
<dbReference type="PhylomeDB" id="P37277"/>
<dbReference type="BioCyc" id="MetaCyc:PSAL-MONOMER"/>
<dbReference type="EvolutionaryTrace" id="P37277"/>
<dbReference type="Proteomes" id="UP000001425">
    <property type="component" value="Chromosome"/>
</dbReference>
<dbReference type="GO" id="GO:0009522">
    <property type="term" value="C:photosystem I"/>
    <property type="evidence" value="ECO:0000314"/>
    <property type="project" value="UniProtKB"/>
</dbReference>
<dbReference type="GO" id="GO:0009538">
    <property type="term" value="C:photosystem I reaction center"/>
    <property type="evidence" value="ECO:0007669"/>
    <property type="project" value="InterPro"/>
</dbReference>
<dbReference type="GO" id="GO:0005886">
    <property type="term" value="C:plasma membrane"/>
    <property type="evidence" value="ECO:0000314"/>
    <property type="project" value="UniProtKB"/>
</dbReference>
<dbReference type="GO" id="GO:0031676">
    <property type="term" value="C:plasma membrane-derived thylakoid membrane"/>
    <property type="evidence" value="ECO:0007669"/>
    <property type="project" value="UniProtKB-SubCell"/>
</dbReference>
<dbReference type="GO" id="GO:0015979">
    <property type="term" value="P:photosynthesis"/>
    <property type="evidence" value="ECO:0007669"/>
    <property type="project" value="UniProtKB-UniRule"/>
</dbReference>
<dbReference type="FunFam" id="1.20.1240.10:FF:000001">
    <property type="entry name" value="Photosystem I reaction center subunit XI"/>
    <property type="match status" value="1"/>
</dbReference>
<dbReference type="Gene3D" id="1.20.1240.10">
    <property type="entry name" value="Photosystem I PsaL, reaction centre subunit XI"/>
    <property type="match status" value="1"/>
</dbReference>
<dbReference type="HAMAP" id="MF_00447">
    <property type="entry name" value="PSI_PsaL"/>
    <property type="match status" value="1"/>
</dbReference>
<dbReference type="InterPro" id="IPR003757">
    <property type="entry name" value="PSI_PsaL"/>
</dbReference>
<dbReference type="InterPro" id="IPR036592">
    <property type="entry name" value="PSI_PsaL_sf"/>
</dbReference>
<dbReference type="InterPro" id="IPR022980">
    <property type="entry name" value="PSI_suXI"/>
</dbReference>
<dbReference type="NCBIfam" id="NF001926">
    <property type="entry name" value="PRK00704.1-3"/>
    <property type="match status" value="1"/>
</dbReference>
<dbReference type="PANTHER" id="PTHR34803">
    <property type="entry name" value="PHOTOSYSTEM I REACTION CENTER SUBUNIT XI, CHLOROPLASTIC"/>
    <property type="match status" value="1"/>
</dbReference>
<dbReference type="PANTHER" id="PTHR34803:SF2">
    <property type="entry name" value="PHOTOSYSTEM I REACTION CENTER SUBUNIT XI, CHLOROPLASTIC"/>
    <property type="match status" value="1"/>
</dbReference>
<dbReference type="Pfam" id="PF02605">
    <property type="entry name" value="PsaL"/>
    <property type="match status" value="1"/>
</dbReference>
<dbReference type="SUPFAM" id="SSF81568">
    <property type="entry name" value="Photosystem I reaction center subunit XI, PsaL"/>
    <property type="match status" value="1"/>
</dbReference>
<name>PSAL_SYNY3</name>
<organism>
    <name type="scientific">Synechocystis sp. (strain ATCC 27184 / PCC 6803 / Kazusa)</name>
    <dbReference type="NCBI Taxonomy" id="1111708"/>
    <lineage>
        <taxon>Bacteria</taxon>
        <taxon>Bacillati</taxon>
        <taxon>Cyanobacteriota</taxon>
        <taxon>Cyanophyceae</taxon>
        <taxon>Synechococcales</taxon>
        <taxon>Merismopediaceae</taxon>
        <taxon>Synechocystis</taxon>
    </lineage>
</organism>